<keyword id="KW-1185">Reference proteome</keyword>
<keyword id="KW-0687">Ribonucleoprotein</keyword>
<keyword id="KW-0689">Ribosomal protein</keyword>
<protein>
    <recommendedName>
        <fullName evidence="1">Large ribosomal subunit protein bL36</fullName>
    </recommendedName>
    <alternativeName>
        <fullName evidence="2">50S ribosomal protein L36</fullName>
    </alternativeName>
</protein>
<sequence>MKVRASVKKICRNCKIVRRNGVVRVICSDGRHKQRQG</sequence>
<dbReference type="EMBL" id="CP000453">
    <property type="protein sequence ID" value="ABI55833.1"/>
    <property type="molecule type" value="Genomic_DNA"/>
</dbReference>
<dbReference type="RefSeq" id="WP_011628228.1">
    <property type="nucleotide sequence ID" value="NC_008340.1"/>
</dbReference>
<dbReference type="SMR" id="Q0ABF4"/>
<dbReference type="KEGG" id="aeh:Mlg_0479"/>
<dbReference type="eggNOG" id="COG0257">
    <property type="taxonomic scope" value="Bacteria"/>
</dbReference>
<dbReference type="HOGENOM" id="CLU_135723_6_2_6"/>
<dbReference type="OrthoDB" id="9802520at2"/>
<dbReference type="Proteomes" id="UP000001962">
    <property type="component" value="Chromosome"/>
</dbReference>
<dbReference type="GO" id="GO:0005737">
    <property type="term" value="C:cytoplasm"/>
    <property type="evidence" value="ECO:0007669"/>
    <property type="project" value="UniProtKB-ARBA"/>
</dbReference>
<dbReference type="GO" id="GO:1990904">
    <property type="term" value="C:ribonucleoprotein complex"/>
    <property type="evidence" value="ECO:0007669"/>
    <property type="project" value="UniProtKB-KW"/>
</dbReference>
<dbReference type="GO" id="GO:0005840">
    <property type="term" value="C:ribosome"/>
    <property type="evidence" value="ECO:0007669"/>
    <property type="project" value="UniProtKB-KW"/>
</dbReference>
<dbReference type="GO" id="GO:0003735">
    <property type="term" value="F:structural constituent of ribosome"/>
    <property type="evidence" value="ECO:0007669"/>
    <property type="project" value="InterPro"/>
</dbReference>
<dbReference type="GO" id="GO:0006412">
    <property type="term" value="P:translation"/>
    <property type="evidence" value="ECO:0007669"/>
    <property type="project" value="UniProtKB-UniRule"/>
</dbReference>
<dbReference type="HAMAP" id="MF_00251">
    <property type="entry name" value="Ribosomal_bL36"/>
    <property type="match status" value="1"/>
</dbReference>
<dbReference type="InterPro" id="IPR000473">
    <property type="entry name" value="Ribosomal_bL36"/>
</dbReference>
<dbReference type="InterPro" id="IPR035977">
    <property type="entry name" value="Ribosomal_bL36_sp"/>
</dbReference>
<dbReference type="NCBIfam" id="TIGR01022">
    <property type="entry name" value="rpmJ_bact"/>
    <property type="match status" value="1"/>
</dbReference>
<dbReference type="PANTHER" id="PTHR42888">
    <property type="entry name" value="50S RIBOSOMAL PROTEIN L36, CHLOROPLASTIC"/>
    <property type="match status" value="1"/>
</dbReference>
<dbReference type="PANTHER" id="PTHR42888:SF1">
    <property type="entry name" value="LARGE RIBOSOMAL SUBUNIT PROTEIN BL36C"/>
    <property type="match status" value="1"/>
</dbReference>
<dbReference type="Pfam" id="PF00444">
    <property type="entry name" value="Ribosomal_L36"/>
    <property type="match status" value="1"/>
</dbReference>
<dbReference type="SUPFAM" id="SSF57840">
    <property type="entry name" value="Ribosomal protein L36"/>
    <property type="match status" value="1"/>
</dbReference>
<dbReference type="PROSITE" id="PS00828">
    <property type="entry name" value="RIBOSOMAL_L36"/>
    <property type="match status" value="1"/>
</dbReference>
<proteinExistence type="inferred from homology"/>
<gene>
    <name evidence="1" type="primary">rpmJ</name>
    <name type="ordered locus">Mlg_0479</name>
</gene>
<organism>
    <name type="scientific">Alkalilimnicola ehrlichii (strain ATCC BAA-1101 / DSM 17681 / MLHE-1)</name>
    <dbReference type="NCBI Taxonomy" id="187272"/>
    <lineage>
        <taxon>Bacteria</taxon>
        <taxon>Pseudomonadati</taxon>
        <taxon>Pseudomonadota</taxon>
        <taxon>Gammaproteobacteria</taxon>
        <taxon>Chromatiales</taxon>
        <taxon>Ectothiorhodospiraceae</taxon>
        <taxon>Alkalilimnicola</taxon>
    </lineage>
</organism>
<name>RL36_ALKEH</name>
<feature type="chain" id="PRO_0000302150" description="Large ribosomal subunit protein bL36">
    <location>
        <begin position="1"/>
        <end position="37"/>
    </location>
</feature>
<comment type="similarity">
    <text evidence="1">Belongs to the bacterial ribosomal protein bL36 family.</text>
</comment>
<evidence type="ECO:0000255" key="1">
    <source>
        <dbReference type="HAMAP-Rule" id="MF_00251"/>
    </source>
</evidence>
<evidence type="ECO:0000305" key="2"/>
<reference key="1">
    <citation type="submission" date="2006-08" db="EMBL/GenBank/DDBJ databases">
        <title>Complete sequence of Alkalilimnicola ehrilichei MLHE-1.</title>
        <authorList>
            <person name="Copeland A."/>
            <person name="Lucas S."/>
            <person name="Lapidus A."/>
            <person name="Barry K."/>
            <person name="Detter J.C."/>
            <person name="Glavina del Rio T."/>
            <person name="Hammon N."/>
            <person name="Israni S."/>
            <person name="Dalin E."/>
            <person name="Tice H."/>
            <person name="Pitluck S."/>
            <person name="Sims D."/>
            <person name="Brettin T."/>
            <person name="Bruce D."/>
            <person name="Han C."/>
            <person name="Tapia R."/>
            <person name="Gilna P."/>
            <person name="Schmutz J."/>
            <person name="Larimer F."/>
            <person name="Land M."/>
            <person name="Hauser L."/>
            <person name="Kyrpides N."/>
            <person name="Mikhailova N."/>
            <person name="Oremland R.S."/>
            <person name="Hoeft S.E."/>
            <person name="Switzer-Blum J."/>
            <person name="Kulp T."/>
            <person name="King G."/>
            <person name="Tabita R."/>
            <person name="Witte B."/>
            <person name="Santini J.M."/>
            <person name="Basu P."/>
            <person name="Hollibaugh J.T."/>
            <person name="Xie G."/>
            <person name="Stolz J.F."/>
            <person name="Richardson P."/>
        </authorList>
    </citation>
    <scope>NUCLEOTIDE SEQUENCE [LARGE SCALE GENOMIC DNA]</scope>
    <source>
        <strain>ATCC BAA-1101 / DSM 17681 / MLHE-1</strain>
    </source>
</reference>
<accession>Q0ABF4</accession>